<sequence length="501" mass="56926">MAKDTALHLPLGLESVGWVLGLLTTSILYLFLSPRSQIPRPPVVNKYWWDFFQIKAKRDFDARAEDLIKLGLSKARAKNTERRFGPRLVLSDKLADAVGMDNRFDQNKGIAPVNLVELRGFESMFSAALHDSVPRPATSATSKRLVHLTQPFSEETTDFLQREWTESPDWHEIVVYPVMSRLTAQVLSRAFVGPKLCRDARWLDIATTYVSHRMTAAVAVQKWGTVLQPIVHWFLPSCRRLRAHIQRARELIQPELDRIKENPLEDETFTSLAWIHGFAQGYIYDAGLAQLRLTAVANHTTSDMVTKILIRICENPELIQPLRDEAIEAVRGGRLRVAALQKMFLMESVMKESQRLEPFFLLSMFRYATETVILPGGTAIPQGTLLTVANPSRLDPAIYPDPEKFDGYRFVRMREDPENAHLAPFTKTNPTNLNFGHGKQACPGRFIAVNQIKIALCHILLKYDVELVEECPSQLIRSGLLTVRNPGAKIRVRRRQEEVSL</sequence>
<keyword id="KW-0017">Alkaloid metabolism</keyword>
<keyword id="KW-0325">Glycoprotein</keyword>
<keyword id="KW-0349">Heme</keyword>
<keyword id="KW-0408">Iron</keyword>
<keyword id="KW-0472">Membrane</keyword>
<keyword id="KW-0479">Metal-binding</keyword>
<keyword id="KW-0503">Monooxygenase</keyword>
<keyword id="KW-0560">Oxidoreductase</keyword>
<keyword id="KW-0812">Transmembrane</keyword>
<keyword id="KW-1133">Transmembrane helix</keyword>
<protein>
    <recommendedName>
        <fullName evidence="7">Cytochrome P450 monooxygenase notH</fullName>
        <ecNumber evidence="9">1.-.-.-</ecNumber>
    </recommendedName>
    <alternativeName>
        <fullName evidence="7">Notoamide biosynthesis cluster protein H</fullName>
    </alternativeName>
</protein>
<dbReference type="EC" id="1.-.-.-" evidence="9"/>
<dbReference type="EMBL" id="HM622670">
    <property type="protein sequence ID" value="ADM34141.1"/>
    <property type="molecule type" value="Genomic_DNA"/>
</dbReference>
<dbReference type="SMR" id="E1ACQ3"/>
<dbReference type="GlyCosmos" id="E1ACQ3">
    <property type="glycosylation" value="1 site, No reported glycans"/>
</dbReference>
<dbReference type="GO" id="GO:0016020">
    <property type="term" value="C:membrane"/>
    <property type="evidence" value="ECO:0007669"/>
    <property type="project" value="UniProtKB-SubCell"/>
</dbReference>
<dbReference type="GO" id="GO:0020037">
    <property type="term" value="F:heme binding"/>
    <property type="evidence" value="ECO:0007669"/>
    <property type="project" value="InterPro"/>
</dbReference>
<dbReference type="GO" id="GO:0005506">
    <property type="term" value="F:iron ion binding"/>
    <property type="evidence" value="ECO:0007669"/>
    <property type="project" value="InterPro"/>
</dbReference>
<dbReference type="GO" id="GO:0004497">
    <property type="term" value="F:monooxygenase activity"/>
    <property type="evidence" value="ECO:0007669"/>
    <property type="project" value="UniProtKB-KW"/>
</dbReference>
<dbReference type="GO" id="GO:0016705">
    <property type="term" value="F:oxidoreductase activity, acting on paired donors, with incorporation or reduction of molecular oxygen"/>
    <property type="evidence" value="ECO:0007669"/>
    <property type="project" value="InterPro"/>
</dbReference>
<dbReference type="GO" id="GO:0009820">
    <property type="term" value="P:alkaloid metabolic process"/>
    <property type="evidence" value="ECO:0007669"/>
    <property type="project" value="UniProtKB-KW"/>
</dbReference>
<dbReference type="GO" id="GO:0019748">
    <property type="term" value="P:secondary metabolic process"/>
    <property type="evidence" value="ECO:0007669"/>
    <property type="project" value="UniProtKB-ARBA"/>
</dbReference>
<dbReference type="CDD" id="cd11041">
    <property type="entry name" value="CYP503A1-like"/>
    <property type="match status" value="1"/>
</dbReference>
<dbReference type="Gene3D" id="1.10.630.10">
    <property type="entry name" value="Cytochrome P450"/>
    <property type="match status" value="1"/>
</dbReference>
<dbReference type="InterPro" id="IPR001128">
    <property type="entry name" value="Cyt_P450"/>
</dbReference>
<dbReference type="InterPro" id="IPR002403">
    <property type="entry name" value="Cyt_P450_E_grp-IV"/>
</dbReference>
<dbReference type="InterPro" id="IPR036396">
    <property type="entry name" value="Cyt_P450_sf"/>
</dbReference>
<dbReference type="PANTHER" id="PTHR46206">
    <property type="entry name" value="CYTOCHROME P450"/>
    <property type="match status" value="1"/>
</dbReference>
<dbReference type="PANTHER" id="PTHR46206:SF3">
    <property type="entry name" value="P450, PUTATIVE (EUROFUNG)-RELATED"/>
    <property type="match status" value="1"/>
</dbReference>
<dbReference type="Pfam" id="PF00067">
    <property type="entry name" value="p450"/>
    <property type="match status" value="1"/>
</dbReference>
<dbReference type="PRINTS" id="PR00465">
    <property type="entry name" value="EP450IV"/>
</dbReference>
<dbReference type="SUPFAM" id="SSF48264">
    <property type="entry name" value="Cytochrome P450"/>
    <property type="match status" value="1"/>
</dbReference>
<feature type="chain" id="PRO_0000448806" description="Cytochrome P450 monooxygenase notH">
    <location>
        <begin position="1"/>
        <end position="501"/>
    </location>
</feature>
<feature type="transmembrane region" description="Helical" evidence="2">
    <location>
        <begin position="11"/>
        <end position="31"/>
    </location>
</feature>
<feature type="binding site" description="axial binding residue" evidence="1">
    <location>
        <position position="442"/>
    </location>
    <ligand>
        <name>heme</name>
        <dbReference type="ChEBI" id="CHEBI:30413"/>
    </ligand>
    <ligandPart>
        <name>Fe</name>
        <dbReference type="ChEBI" id="CHEBI:18248"/>
    </ligandPart>
</feature>
<feature type="glycosylation site" description="N-linked (GlcNAc...) asparagine" evidence="3">
    <location>
        <position position="298"/>
    </location>
</feature>
<name>NOTH_ASPSM</name>
<organism>
    <name type="scientific">Aspergillus sp. (strain MF297-2)</name>
    <dbReference type="NCBI Taxonomy" id="877550"/>
    <lineage>
        <taxon>Eukaryota</taxon>
        <taxon>Fungi</taxon>
        <taxon>Dikarya</taxon>
        <taxon>Ascomycota</taxon>
        <taxon>Pezizomycotina</taxon>
        <taxon>Eurotiomycetes</taxon>
        <taxon>Eurotiomycetidae</taxon>
        <taxon>Eurotiales</taxon>
        <taxon>Aspergillaceae</taxon>
        <taxon>Aspergillus</taxon>
    </lineage>
</organism>
<gene>
    <name evidence="7" type="primary">notH</name>
</gene>
<comment type="function">
    <text evidence="5 6 9">Cytochrome P450 monooxygenase; part of the gene cluster that mediates the biosynthesis of notoamide, a fungal indole alkaloid that belongs to a family of natural products containing a characteristic bicyclo[2.2.2]diazaoctane core (PubMed:20722388). The first step of notoamide biosynthesis involves coupling of L-proline and L-tryptophan by the bimodular NRPS notE, to produce cyclo-L-tryptophan-L-proline called brevianamide F (PubMed:20722388). The reverse prenyltransferase notF then acts as a deoxybrevianamide E synthase and converts brevianamide F to deoxybrevianamide E via reverse prenylation at C-2 of the indole ring leading to the bicyclo[2.2.2]diazaoctane core (PubMed:20722388). Deoxybrevianamide E is further hydroxylated at C-6 of the indole ring, likely catalyzed by the cytochrome P450 monooxygenase notG, to yield 6-hydroxy-deoxybrevianamide E (Probable). 6-hydroxy-deoxybrevianamide E is a specific substrate of the prenyltransferase notC for normal prenylation at C-7 to produce 6-hydroxy-7-prenyl-deoxybrevianamide, also called notoamide S (PubMed:20722388). As the proposed pivotal branching point in notoamide biosynthesis, notoamide S can be diverted to notoamide E through an oxidative pyran ring closure putatively catalyzed by either notH cytochrome P450 monooxygenase or the notD FAD-linked oxidoreductase (Probable). This step would be followed by an indole 2,3-epoxidation-initiated pinacol-like rearrangement catalyzed by the notB FAD-dependent monooxygenase leading to the formation of notoamide C and notoamide D (PubMed:22188465). On the other hand notoamide S is converted to notoamide T by notH (or notD), a bifunctional oxidase that also functions as the intramolecular Diels-Alderase responsible for generation of (+)-notoamide T (Probable). To generate antipodal (-)-notoaminide T, notH' (or notD') in Aspergillus versicolor is expected to catalyze a Diels-Alder reaction leading to the opposite stereochemistry (Probable). The remaining oxidoreductase notD (or notH) likely catalyzes the oxidative pyran ring formation to yield (+)-stephacidin A (Probable). The FAD-dependent monooxygenase notI is highly similar to notB and is predicted to catalyze a similar conversion from (+)-stephacidin A to (-)-notoamide B via the 2,3-epoxidation of (+)-stephacidin A followed by a pinacol-type rearrangement (Probable). Finally, it remains unclear which enzyme could be responsible for the final hydroxylation steps leading to notoamide A and sclerotiamide (Probable).</text>
</comment>
<comment type="cofactor">
    <cofactor evidence="1">
        <name>heme</name>
        <dbReference type="ChEBI" id="CHEBI:30413"/>
    </cofactor>
</comment>
<comment type="pathway">
    <text evidence="9">Alkaloid biosynthesis.</text>
</comment>
<comment type="subcellular location">
    <subcellularLocation>
        <location evidence="2">Membrane</location>
        <topology evidence="2">Single-pass membrane protein</topology>
    </subcellularLocation>
</comment>
<comment type="biotechnology">
    <text evidence="4">Notoamides have been shown to exhibit antitumoral activities (PubMed:17304611). Notoamides A-C show moderate cytotoxicity against HeLa and L1210 cells with IC(50) values in the range of 22-52 mg/ml, but the IC(50) value of notoamide D is greater than 100 mg/ml (PubMed:17304611). Moreover, notoamide C induces G2/M-cell cycle arrest at a concentration of 6.3 mg/ml (PubMed:17304611).</text>
</comment>
<comment type="similarity">
    <text evidence="8">Belongs to the cytochrome P450 family.</text>
</comment>
<evidence type="ECO:0000250" key="1">
    <source>
        <dbReference type="UniProtKB" id="P04798"/>
    </source>
</evidence>
<evidence type="ECO:0000255" key="2"/>
<evidence type="ECO:0000255" key="3">
    <source>
        <dbReference type="PROSITE-ProRule" id="PRU00498"/>
    </source>
</evidence>
<evidence type="ECO:0000269" key="4">
    <source>
    </source>
</evidence>
<evidence type="ECO:0000269" key="5">
    <source>
    </source>
</evidence>
<evidence type="ECO:0000269" key="6">
    <source>
    </source>
</evidence>
<evidence type="ECO:0000303" key="7">
    <source>
    </source>
</evidence>
<evidence type="ECO:0000305" key="8"/>
<evidence type="ECO:0000305" key="9">
    <source>
    </source>
</evidence>
<reference key="1">
    <citation type="journal article" date="2010" name="J. Am. Chem. Soc.">
        <title>Genome-based characterization of two prenylation steps in the assembly of the stephacidin and notoamide anticancer agents in a marine-derived Aspergillus sp.</title>
        <authorList>
            <person name="Ding Y."/>
            <person name="de Wet J.R."/>
            <person name="Cavalcoli J."/>
            <person name="Li S."/>
            <person name="Greshock T.J."/>
            <person name="Miller K.A."/>
            <person name="Finefield J.M."/>
            <person name="Sunderhaus J.D."/>
            <person name="McAfoos T.J."/>
            <person name="Tsukamoto S."/>
            <person name="Williams R.M."/>
            <person name="Sherman D.H."/>
        </authorList>
    </citation>
    <scope>NUCLEOTIDE SEQUENCE [GENOMIC DNA]</scope>
    <scope>FUNCTION</scope>
    <source>
        <strain>MF297-2</strain>
    </source>
</reference>
<reference key="2">
    <citation type="journal article" date="2007" name="Angew. Chem. Int. Ed.">
        <title>Notoamides A-D: prenylated indole alkaloids isolated from a marine-derived fungus, Aspergillus sp.</title>
        <authorList>
            <person name="Kato H."/>
            <person name="Yoshida T."/>
            <person name="Tokue T."/>
            <person name="Nojiri Y."/>
            <person name="Hirota H."/>
            <person name="Ohta T."/>
            <person name="Williams R.M."/>
            <person name="Tsukamoto S."/>
        </authorList>
    </citation>
    <scope>BIOTECHNOLOGY</scope>
</reference>
<reference key="3">
    <citation type="journal article" date="2012" name="J. Am. Chem. Soc.">
        <title>Biochemical characterization of NotB as an FAD-dependent oxidase in the biosynthesis of notoamide indole alkaloids.</title>
        <authorList>
            <person name="Li S."/>
            <person name="Finefield J.M."/>
            <person name="Sunderhaus J.D."/>
            <person name="McAfoos T.J."/>
            <person name="Williams R.M."/>
            <person name="Sherman D.H."/>
        </authorList>
    </citation>
    <scope>FUNCTION</scope>
</reference>
<reference key="4">
    <citation type="journal article" date="2012" name="Med. Chem. Commun.">
        <title>Comparative analysis of the biosynthetic systems for fungal bicyclo[2.2.2]diazaoctane indole alkaloids: the (+)/(-)-notoamide, paraherquamide and malbrancheamide pathways.</title>
        <authorList>
            <person name="Li S."/>
            <person name="Anand K."/>
            <person name="Tran H."/>
            <person name="Yu F."/>
            <person name="Finefield J.M."/>
            <person name="Sunderhaus J.D."/>
            <person name="McAfoos T.J."/>
            <person name="Tsukamoto S."/>
            <person name="Williams R.M."/>
            <person name="Sherman D.H."/>
        </authorList>
    </citation>
    <scope>FUNCTION</scope>
    <scope>PATHWAY</scope>
</reference>
<accession>E1ACQ3</accession>
<proteinExistence type="evidence at protein level"/>